<comment type="function">
    <text evidence="1">Phosphorylation of dTMP to form dTDP in both de novo and salvage pathways of dTTP synthesis.</text>
</comment>
<comment type="catalytic activity">
    <reaction evidence="1">
        <text>dTMP + ATP = dTDP + ADP</text>
        <dbReference type="Rhea" id="RHEA:13517"/>
        <dbReference type="ChEBI" id="CHEBI:30616"/>
        <dbReference type="ChEBI" id="CHEBI:58369"/>
        <dbReference type="ChEBI" id="CHEBI:63528"/>
        <dbReference type="ChEBI" id="CHEBI:456216"/>
        <dbReference type="EC" id="2.7.4.9"/>
    </reaction>
</comment>
<comment type="similarity">
    <text evidence="1">Belongs to the thymidylate kinase family.</text>
</comment>
<proteinExistence type="inferred from homology"/>
<dbReference type="EC" id="2.7.4.9" evidence="1"/>
<dbReference type="EMBL" id="CP000094">
    <property type="protein sequence ID" value="ABA75889.1"/>
    <property type="molecule type" value="Genomic_DNA"/>
</dbReference>
<dbReference type="RefSeq" id="WP_011335432.1">
    <property type="nucleotide sequence ID" value="NC_007492.2"/>
</dbReference>
<dbReference type="SMR" id="Q3K8L5"/>
<dbReference type="KEGG" id="pfo:Pfl01_4152"/>
<dbReference type="eggNOG" id="COG0125">
    <property type="taxonomic scope" value="Bacteria"/>
</dbReference>
<dbReference type="HOGENOM" id="CLU_049131_0_2_6"/>
<dbReference type="Proteomes" id="UP000002704">
    <property type="component" value="Chromosome"/>
</dbReference>
<dbReference type="GO" id="GO:0005829">
    <property type="term" value="C:cytosol"/>
    <property type="evidence" value="ECO:0007669"/>
    <property type="project" value="TreeGrafter"/>
</dbReference>
<dbReference type="GO" id="GO:0005524">
    <property type="term" value="F:ATP binding"/>
    <property type="evidence" value="ECO:0007669"/>
    <property type="project" value="UniProtKB-UniRule"/>
</dbReference>
<dbReference type="GO" id="GO:0004798">
    <property type="term" value="F:dTMP kinase activity"/>
    <property type="evidence" value="ECO:0007669"/>
    <property type="project" value="UniProtKB-UniRule"/>
</dbReference>
<dbReference type="GO" id="GO:0006233">
    <property type="term" value="P:dTDP biosynthetic process"/>
    <property type="evidence" value="ECO:0007669"/>
    <property type="project" value="InterPro"/>
</dbReference>
<dbReference type="GO" id="GO:0006235">
    <property type="term" value="P:dTTP biosynthetic process"/>
    <property type="evidence" value="ECO:0007669"/>
    <property type="project" value="UniProtKB-UniRule"/>
</dbReference>
<dbReference type="GO" id="GO:0006227">
    <property type="term" value="P:dUDP biosynthetic process"/>
    <property type="evidence" value="ECO:0007669"/>
    <property type="project" value="TreeGrafter"/>
</dbReference>
<dbReference type="CDD" id="cd01672">
    <property type="entry name" value="TMPK"/>
    <property type="match status" value="1"/>
</dbReference>
<dbReference type="FunFam" id="3.40.50.300:FF:000225">
    <property type="entry name" value="Thymidylate kinase"/>
    <property type="match status" value="1"/>
</dbReference>
<dbReference type="Gene3D" id="3.40.50.300">
    <property type="entry name" value="P-loop containing nucleotide triphosphate hydrolases"/>
    <property type="match status" value="1"/>
</dbReference>
<dbReference type="HAMAP" id="MF_00165">
    <property type="entry name" value="Thymidylate_kinase"/>
    <property type="match status" value="1"/>
</dbReference>
<dbReference type="InterPro" id="IPR027417">
    <property type="entry name" value="P-loop_NTPase"/>
</dbReference>
<dbReference type="InterPro" id="IPR039430">
    <property type="entry name" value="Thymidylate_kin-like_dom"/>
</dbReference>
<dbReference type="InterPro" id="IPR018095">
    <property type="entry name" value="Thymidylate_kin_CS"/>
</dbReference>
<dbReference type="InterPro" id="IPR018094">
    <property type="entry name" value="Thymidylate_kinase"/>
</dbReference>
<dbReference type="NCBIfam" id="TIGR00041">
    <property type="entry name" value="DTMP_kinase"/>
    <property type="match status" value="1"/>
</dbReference>
<dbReference type="PANTHER" id="PTHR10344">
    <property type="entry name" value="THYMIDYLATE KINASE"/>
    <property type="match status" value="1"/>
</dbReference>
<dbReference type="PANTHER" id="PTHR10344:SF4">
    <property type="entry name" value="UMP-CMP KINASE 2, MITOCHONDRIAL"/>
    <property type="match status" value="1"/>
</dbReference>
<dbReference type="Pfam" id="PF02223">
    <property type="entry name" value="Thymidylate_kin"/>
    <property type="match status" value="1"/>
</dbReference>
<dbReference type="SUPFAM" id="SSF52540">
    <property type="entry name" value="P-loop containing nucleoside triphosphate hydrolases"/>
    <property type="match status" value="1"/>
</dbReference>
<dbReference type="PROSITE" id="PS01331">
    <property type="entry name" value="THYMIDYLATE_KINASE"/>
    <property type="match status" value="1"/>
</dbReference>
<sequence>MTGLFITLEGPEGAGKSTNREYLAERLRAAGIEVVLTREPGGTPLAERIREVLLAPVDEVMNPDTELLLVFAARAQHLAEVIRPALARGAVVLCDRFTDSTYAYQGGGRGLSLERIAALETFVQGDLRPDLTLIFDLPVEIGLARASARGRLDRFELEGREFFEAVRNAFLKRAEDDPARYVRIDAGQPLVKVQQSLDTLIPNLLELSRG</sequence>
<accession>Q3K8L5</accession>
<gene>
    <name evidence="1" type="primary">tmk</name>
    <name type="ordered locus">Pfl01_4152</name>
</gene>
<reference key="1">
    <citation type="journal article" date="2009" name="Genome Biol.">
        <title>Genomic and genetic analyses of diversity and plant interactions of Pseudomonas fluorescens.</title>
        <authorList>
            <person name="Silby M.W."/>
            <person name="Cerdeno-Tarraga A.M."/>
            <person name="Vernikos G.S."/>
            <person name="Giddens S.R."/>
            <person name="Jackson R.W."/>
            <person name="Preston G.M."/>
            <person name="Zhang X.-X."/>
            <person name="Moon C.D."/>
            <person name="Gehrig S.M."/>
            <person name="Godfrey S.A.C."/>
            <person name="Knight C.G."/>
            <person name="Malone J.G."/>
            <person name="Robinson Z."/>
            <person name="Spiers A.J."/>
            <person name="Harris S."/>
            <person name="Challis G.L."/>
            <person name="Yaxley A.M."/>
            <person name="Harris D."/>
            <person name="Seeger K."/>
            <person name="Murphy L."/>
            <person name="Rutter S."/>
            <person name="Squares R."/>
            <person name="Quail M.A."/>
            <person name="Saunders E."/>
            <person name="Mavromatis K."/>
            <person name="Brettin T.S."/>
            <person name="Bentley S.D."/>
            <person name="Hothersall J."/>
            <person name="Stephens E."/>
            <person name="Thomas C.M."/>
            <person name="Parkhill J."/>
            <person name="Levy S.B."/>
            <person name="Rainey P.B."/>
            <person name="Thomson N.R."/>
        </authorList>
    </citation>
    <scope>NUCLEOTIDE SEQUENCE [LARGE SCALE GENOMIC DNA]</scope>
    <source>
        <strain>Pf0-1</strain>
    </source>
</reference>
<organism>
    <name type="scientific">Pseudomonas fluorescens (strain Pf0-1)</name>
    <dbReference type="NCBI Taxonomy" id="205922"/>
    <lineage>
        <taxon>Bacteria</taxon>
        <taxon>Pseudomonadati</taxon>
        <taxon>Pseudomonadota</taxon>
        <taxon>Gammaproteobacteria</taxon>
        <taxon>Pseudomonadales</taxon>
        <taxon>Pseudomonadaceae</taxon>
        <taxon>Pseudomonas</taxon>
    </lineage>
</organism>
<name>KTHY_PSEPF</name>
<protein>
    <recommendedName>
        <fullName evidence="1">Thymidylate kinase</fullName>
        <ecNumber evidence="1">2.7.4.9</ecNumber>
    </recommendedName>
    <alternativeName>
        <fullName evidence="1">dTMP kinase</fullName>
    </alternativeName>
</protein>
<evidence type="ECO:0000255" key="1">
    <source>
        <dbReference type="HAMAP-Rule" id="MF_00165"/>
    </source>
</evidence>
<keyword id="KW-0067">ATP-binding</keyword>
<keyword id="KW-0418">Kinase</keyword>
<keyword id="KW-0545">Nucleotide biosynthesis</keyword>
<keyword id="KW-0547">Nucleotide-binding</keyword>
<keyword id="KW-0808">Transferase</keyword>
<feature type="chain" id="PRO_1000023260" description="Thymidylate kinase">
    <location>
        <begin position="1"/>
        <end position="210"/>
    </location>
</feature>
<feature type="binding site" evidence="1">
    <location>
        <begin position="10"/>
        <end position="17"/>
    </location>
    <ligand>
        <name>ATP</name>
        <dbReference type="ChEBI" id="CHEBI:30616"/>
    </ligand>
</feature>